<name>RLMN_TREDE</name>
<dbReference type="EC" id="2.1.1.192" evidence="1"/>
<dbReference type="EMBL" id="AE017226">
    <property type="protein sequence ID" value="AAS12586.1"/>
    <property type="molecule type" value="Genomic_DNA"/>
</dbReference>
<dbReference type="RefSeq" id="NP_972675.1">
    <property type="nucleotide sequence ID" value="NC_002967.9"/>
</dbReference>
<dbReference type="RefSeq" id="WP_002679871.1">
    <property type="nucleotide sequence ID" value="NC_002967.9"/>
</dbReference>
<dbReference type="SMR" id="Q73KZ3"/>
<dbReference type="STRING" id="243275.TDE_2074"/>
<dbReference type="PaxDb" id="243275-TDE_2074"/>
<dbReference type="GeneID" id="2741201"/>
<dbReference type="KEGG" id="tde:TDE_2074"/>
<dbReference type="PATRIC" id="fig|243275.7.peg.1959"/>
<dbReference type="eggNOG" id="COG0820">
    <property type="taxonomic scope" value="Bacteria"/>
</dbReference>
<dbReference type="HOGENOM" id="CLU_029101_0_0_12"/>
<dbReference type="OrthoDB" id="9793973at2"/>
<dbReference type="Proteomes" id="UP000008212">
    <property type="component" value="Chromosome"/>
</dbReference>
<dbReference type="GO" id="GO:0005737">
    <property type="term" value="C:cytoplasm"/>
    <property type="evidence" value="ECO:0007669"/>
    <property type="project" value="UniProtKB-SubCell"/>
</dbReference>
<dbReference type="GO" id="GO:0051539">
    <property type="term" value="F:4 iron, 4 sulfur cluster binding"/>
    <property type="evidence" value="ECO:0007669"/>
    <property type="project" value="UniProtKB-UniRule"/>
</dbReference>
<dbReference type="GO" id="GO:0046872">
    <property type="term" value="F:metal ion binding"/>
    <property type="evidence" value="ECO:0007669"/>
    <property type="project" value="UniProtKB-KW"/>
</dbReference>
<dbReference type="GO" id="GO:0070040">
    <property type="term" value="F:rRNA (adenine(2503)-C2-)-methyltransferase activity"/>
    <property type="evidence" value="ECO:0007669"/>
    <property type="project" value="UniProtKB-UniRule"/>
</dbReference>
<dbReference type="GO" id="GO:0019843">
    <property type="term" value="F:rRNA binding"/>
    <property type="evidence" value="ECO:0007669"/>
    <property type="project" value="UniProtKB-UniRule"/>
</dbReference>
<dbReference type="GO" id="GO:0002935">
    <property type="term" value="F:tRNA (adenine(37)-C2)-methyltransferase activity"/>
    <property type="evidence" value="ECO:0007669"/>
    <property type="project" value="UniProtKB-UniRule"/>
</dbReference>
<dbReference type="GO" id="GO:0000049">
    <property type="term" value="F:tRNA binding"/>
    <property type="evidence" value="ECO:0007669"/>
    <property type="project" value="UniProtKB-UniRule"/>
</dbReference>
<dbReference type="GO" id="GO:0070475">
    <property type="term" value="P:rRNA base methylation"/>
    <property type="evidence" value="ECO:0007669"/>
    <property type="project" value="UniProtKB-UniRule"/>
</dbReference>
<dbReference type="GO" id="GO:0030488">
    <property type="term" value="P:tRNA methylation"/>
    <property type="evidence" value="ECO:0007669"/>
    <property type="project" value="UniProtKB-UniRule"/>
</dbReference>
<dbReference type="CDD" id="cd01335">
    <property type="entry name" value="Radical_SAM"/>
    <property type="match status" value="1"/>
</dbReference>
<dbReference type="FunFam" id="3.20.20.70:FF:000014">
    <property type="entry name" value="Probable dual-specificity RNA methyltransferase RlmN"/>
    <property type="match status" value="1"/>
</dbReference>
<dbReference type="Gene3D" id="1.10.150.530">
    <property type="match status" value="1"/>
</dbReference>
<dbReference type="Gene3D" id="3.20.20.70">
    <property type="entry name" value="Aldolase class I"/>
    <property type="match status" value="1"/>
</dbReference>
<dbReference type="HAMAP" id="MF_01849">
    <property type="entry name" value="RNA_methyltr_RlmN"/>
    <property type="match status" value="1"/>
</dbReference>
<dbReference type="InterPro" id="IPR013785">
    <property type="entry name" value="Aldolase_TIM"/>
</dbReference>
<dbReference type="InterPro" id="IPR006638">
    <property type="entry name" value="Elp3/MiaA/NifB-like_rSAM"/>
</dbReference>
<dbReference type="InterPro" id="IPR040072">
    <property type="entry name" value="Methyltransferase_A"/>
</dbReference>
<dbReference type="InterPro" id="IPR048641">
    <property type="entry name" value="RlmN_N"/>
</dbReference>
<dbReference type="InterPro" id="IPR027492">
    <property type="entry name" value="RNA_MTrfase_RlmN"/>
</dbReference>
<dbReference type="InterPro" id="IPR004383">
    <property type="entry name" value="rRNA_lsu_MTrfase_RlmN/Cfr"/>
</dbReference>
<dbReference type="InterPro" id="IPR007197">
    <property type="entry name" value="rSAM"/>
</dbReference>
<dbReference type="NCBIfam" id="TIGR00048">
    <property type="entry name" value="rRNA_mod_RlmN"/>
    <property type="match status" value="1"/>
</dbReference>
<dbReference type="PANTHER" id="PTHR30544">
    <property type="entry name" value="23S RRNA METHYLTRANSFERASE"/>
    <property type="match status" value="1"/>
</dbReference>
<dbReference type="PANTHER" id="PTHR30544:SF5">
    <property type="entry name" value="RADICAL SAM CORE DOMAIN-CONTAINING PROTEIN"/>
    <property type="match status" value="1"/>
</dbReference>
<dbReference type="Pfam" id="PF04055">
    <property type="entry name" value="Radical_SAM"/>
    <property type="match status" value="1"/>
</dbReference>
<dbReference type="Pfam" id="PF21016">
    <property type="entry name" value="RlmN_N"/>
    <property type="match status" value="1"/>
</dbReference>
<dbReference type="PIRSF" id="PIRSF006004">
    <property type="entry name" value="CHP00048"/>
    <property type="match status" value="1"/>
</dbReference>
<dbReference type="SFLD" id="SFLDF00275">
    <property type="entry name" value="adenosine_C2_methyltransferase"/>
    <property type="match status" value="1"/>
</dbReference>
<dbReference type="SFLD" id="SFLDG01062">
    <property type="entry name" value="methyltransferase_(Class_A)"/>
    <property type="match status" value="1"/>
</dbReference>
<dbReference type="SMART" id="SM00729">
    <property type="entry name" value="Elp3"/>
    <property type="match status" value="1"/>
</dbReference>
<dbReference type="SUPFAM" id="SSF102114">
    <property type="entry name" value="Radical SAM enzymes"/>
    <property type="match status" value="1"/>
</dbReference>
<dbReference type="PROSITE" id="PS51918">
    <property type="entry name" value="RADICAL_SAM"/>
    <property type="match status" value="1"/>
</dbReference>
<keyword id="KW-0004">4Fe-4S</keyword>
<keyword id="KW-0963">Cytoplasm</keyword>
<keyword id="KW-1015">Disulfide bond</keyword>
<keyword id="KW-0408">Iron</keyword>
<keyword id="KW-0411">Iron-sulfur</keyword>
<keyword id="KW-0479">Metal-binding</keyword>
<keyword id="KW-0489">Methyltransferase</keyword>
<keyword id="KW-1185">Reference proteome</keyword>
<keyword id="KW-0698">rRNA processing</keyword>
<keyword id="KW-0949">S-adenosyl-L-methionine</keyword>
<keyword id="KW-0808">Transferase</keyword>
<keyword id="KW-0819">tRNA processing</keyword>
<reference key="1">
    <citation type="journal article" date="2004" name="Proc. Natl. Acad. Sci. U.S.A.">
        <title>Comparison of the genome of the oral pathogen Treponema denticola with other spirochete genomes.</title>
        <authorList>
            <person name="Seshadri R."/>
            <person name="Myers G.S.A."/>
            <person name="Tettelin H."/>
            <person name="Eisen J.A."/>
            <person name="Heidelberg J.F."/>
            <person name="Dodson R.J."/>
            <person name="Davidsen T.M."/>
            <person name="DeBoy R.T."/>
            <person name="Fouts D.E."/>
            <person name="Haft D.H."/>
            <person name="Selengut J."/>
            <person name="Ren Q."/>
            <person name="Brinkac L.M."/>
            <person name="Madupu R."/>
            <person name="Kolonay J.F."/>
            <person name="Durkin S.A."/>
            <person name="Daugherty S.C."/>
            <person name="Shetty J."/>
            <person name="Shvartsbeyn A."/>
            <person name="Gebregeorgis E."/>
            <person name="Geer K."/>
            <person name="Tsegaye G."/>
            <person name="Malek J.A."/>
            <person name="Ayodeji B."/>
            <person name="Shatsman S."/>
            <person name="McLeod M.P."/>
            <person name="Smajs D."/>
            <person name="Howell J.K."/>
            <person name="Pal S."/>
            <person name="Amin A."/>
            <person name="Vashisth P."/>
            <person name="McNeill T.Z."/>
            <person name="Xiang Q."/>
            <person name="Sodergren E."/>
            <person name="Baca E."/>
            <person name="Weinstock G.M."/>
            <person name="Norris S.J."/>
            <person name="Fraser C.M."/>
            <person name="Paulsen I.T."/>
        </authorList>
    </citation>
    <scope>NUCLEOTIDE SEQUENCE [LARGE SCALE GENOMIC DNA]</scope>
    <source>
        <strain>ATCC 35405 / DSM 14222 / CIP 103919 / JCM 8153 / KCTC 15104</strain>
    </source>
</reference>
<organism>
    <name type="scientific">Treponema denticola (strain ATCC 35405 / DSM 14222 / CIP 103919 / JCM 8153 / KCTC 15104)</name>
    <dbReference type="NCBI Taxonomy" id="243275"/>
    <lineage>
        <taxon>Bacteria</taxon>
        <taxon>Pseudomonadati</taxon>
        <taxon>Spirochaetota</taxon>
        <taxon>Spirochaetia</taxon>
        <taxon>Spirochaetales</taxon>
        <taxon>Treponemataceae</taxon>
        <taxon>Treponema</taxon>
    </lineage>
</organism>
<evidence type="ECO:0000255" key="1">
    <source>
        <dbReference type="HAMAP-Rule" id="MF_01849"/>
    </source>
</evidence>
<evidence type="ECO:0000255" key="2">
    <source>
        <dbReference type="PROSITE-ProRule" id="PRU01266"/>
    </source>
</evidence>
<protein>
    <recommendedName>
        <fullName evidence="1">Probable dual-specificity RNA methyltransferase RlmN</fullName>
        <ecNumber evidence="1">2.1.1.192</ecNumber>
    </recommendedName>
    <alternativeName>
        <fullName evidence="1">23S rRNA (adenine(2503)-C(2))-methyltransferase</fullName>
    </alternativeName>
    <alternativeName>
        <fullName evidence="1">23S rRNA m2A2503 methyltransferase</fullName>
    </alternativeName>
    <alternativeName>
        <fullName evidence="1">Ribosomal RNA large subunit methyltransferase N</fullName>
    </alternativeName>
    <alternativeName>
        <fullName evidence="1">tRNA (adenine(37)-C(2))-methyltransferase</fullName>
    </alternativeName>
    <alternativeName>
        <fullName evidence="1">tRNA m2A37 methyltransferase</fullName>
    </alternativeName>
</protein>
<comment type="function">
    <text evidence="1">Specifically methylates position 2 of adenine 2503 in 23S rRNA and position 2 of adenine 37 in tRNAs.</text>
</comment>
<comment type="catalytic activity">
    <reaction evidence="1">
        <text>adenosine(2503) in 23S rRNA + 2 reduced [2Fe-2S]-[ferredoxin] + 2 S-adenosyl-L-methionine = 2-methyladenosine(2503) in 23S rRNA + 5'-deoxyadenosine + L-methionine + 2 oxidized [2Fe-2S]-[ferredoxin] + S-adenosyl-L-homocysteine</text>
        <dbReference type="Rhea" id="RHEA:42916"/>
        <dbReference type="Rhea" id="RHEA-COMP:10000"/>
        <dbReference type="Rhea" id="RHEA-COMP:10001"/>
        <dbReference type="Rhea" id="RHEA-COMP:10152"/>
        <dbReference type="Rhea" id="RHEA-COMP:10282"/>
        <dbReference type="ChEBI" id="CHEBI:17319"/>
        <dbReference type="ChEBI" id="CHEBI:33737"/>
        <dbReference type="ChEBI" id="CHEBI:33738"/>
        <dbReference type="ChEBI" id="CHEBI:57844"/>
        <dbReference type="ChEBI" id="CHEBI:57856"/>
        <dbReference type="ChEBI" id="CHEBI:59789"/>
        <dbReference type="ChEBI" id="CHEBI:74411"/>
        <dbReference type="ChEBI" id="CHEBI:74497"/>
        <dbReference type="EC" id="2.1.1.192"/>
    </reaction>
</comment>
<comment type="catalytic activity">
    <reaction evidence="1">
        <text>adenosine(37) in tRNA + 2 reduced [2Fe-2S]-[ferredoxin] + 2 S-adenosyl-L-methionine = 2-methyladenosine(37) in tRNA + 5'-deoxyadenosine + L-methionine + 2 oxidized [2Fe-2S]-[ferredoxin] + S-adenosyl-L-homocysteine</text>
        <dbReference type="Rhea" id="RHEA:43332"/>
        <dbReference type="Rhea" id="RHEA-COMP:10000"/>
        <dbReference type="Rhea" id="RHEA-COMP:10001"/>
        <dbReference type="Rhea" id="RHEA-COMP:10162"/>
        <dbReference type="Rhea" id="RHEA-COMP:10485"/>
        <dbReference type="ChEBI" id="CHEBI:17319"/>
        <dbReference type="ChEBI" id="CHEBI:33737"/>
        <dbReference type="ChEBI" id="CHEBI:33738"/>
        <dbReference type="ChEBI" id="CHEBI:57844"/>
        <dbReference type="ChEBI" id="CHEBI:57856"/>
        <dbReference type="ChEBI" id="CHEBI:59789"/>
        <dbReference type="ChEBI" id="CHEBI:74411"/>
        <dbReference type="ChEBI" id="CHEBI:74497"/>
        <dbReference type="EC" id="2.1.1.192"/>
    </reaction>
</comment>
<comment type="cofactor">
    <cofactor evidence="1">
        <name>[4Fe-4S] cluster</name>
        <dbReference type="ChEBI" id="CHEBI:49883"/>
    </cofactor>
    <text evidence="1">Binds 1 [4Fe-4S] cluster. The cluster is coordinated with 3 cysteines and an exchangeable S-adenosyl-L-methionine.</text>
</comment>
<comment type="subcellular location">
    <subcellularLocation>
        <location evidence="1">Cytoplasm</location>
    </subcellularLocation>
</comment>
<comment type="miscellaneous">
    <text evidence="1">Reaction proceeds by a ping-pong mechanism involving intermediate methylation of a conserved cysteine residue.</text>
</comment>
<comment type="similarity">
    <text evidence="1">Belongs to the radical SAM superfamily. RlmN family.</text>
</comment>
<proteinExistence type="inferred from homology"/>
<gene>
    <name evidence="1" type="primary">rlmN</name>
    <name type="ordered locus">TDE_2074</name>
</gene>
<accession>Q73KZ3</accession>
<sequence length="347" mass="38599">MTIKKYKTALSGMFPEEIQSFCGLKEKFRAQQIFHWIASGVNSFDEMTNLSFDMRSKLKNDFSLFSTKIKEALKDKDGTIKLAVELYDGSVIETVLLTDKAKRKTACVSCQAGCPMKCAFCKTGQIGFLRNLSASEIVEQFLHLEREAGSLDNIVFMGMGEPMLNLPEIDKAINILAHPKGRNLSKRRITISTSGLCKGIYEMADKGPEVRLAVSLTTADETLRSELMPITKTNSLDELKQAIKYFNSKSNKRVTLELALMKGLNTDKKAAQEVIEFAKGLECFINLIPWNPVEGLNFKTPSETEVRTFETYLKKAGLNISTRQKRGQSIGGACGQLGSTAARSNRF</sequence>
<feature type="chain" id="PRO_0000350508" description="Probable dual-specificity RNA methyltransferase RlmN">
    <location>
        <begin position="1"/>
        <end position="347"/>
    </location>
</feature>
<feature type="domain" description="Radical SAM core" evidence="2">
    <location>
        <begin position="100"/>
        <end position="323"/>
    </location>
</feature>
<feature type="active site" description="Proton acceptor" evidence="1">
    <location>
        <position position="93"/>
    </location>
</feature>
<feature type="active site" description="S-methylcysteine intermediate" evidence="1">
    <location>
        <position position="334"/>
    </location>
</feature>
<feature type="binding site" evidence="1">
    <location>
        <position position="114"/>
    </location>
    <ligand>
        <name>[4Fe-4S] cluster</name>
        <dbReference type="ChEBI" id="CHEBI:49883"/>
        <note>4Fe-4S-S-AdoMet</note>
    </ligand>
</feature>
<feature type="binding site" evidence="1">
    <location>
        <position position="118"/>
    </location>
    <ligand>
        <name>[4Fe-4S] cluster</name>
        <dbReference type="ChEBI" id="CHEBI:49883"/>
        <note>4Fe-4S-S-AdoMet</note>
    </ligand>
</feature>
<feature type="binding site" evidence="1">
    <location>
        <position position="121"/>
    </location>
    <ligand>
        <name>[4Fe-4S] cluster</name>
        <dbReference type="ChEBI" id="CHEBI:49883"/>
        <note>4Fe-4S-S-AdoMet</note>
    </ligand>
</feature>
<feature type="binding site" evidence="1">
    <location>
        <begin position="160"/>
        <end position="161"/>
    </location>
    <ligand>
        <name>S-adenosyl-L-methionine</name>
        <dbReference type="ChEBI" id="CHEBI:59789"/>
    </ligand>
</feature>
<feature type="binding site" evidence="1">
    <location>
        <position position="192"/>
    </location>
    <ligand>
        <name>S-adenosyl-L-methionine</name>
        <dbReference type="ChEBI" id="CHEBI:59789"/>
    </ligand>
</feature>
<feature type="binding site" evidence="1">
    <location>
        <begin position="215"/>
        <end position="217"/>
    </location>
    <ligand>
        <name>S-adenosyl-L-methionine</name>
        <dbReference type="ChEBI" id="CHEBI:59789"/>
    </ligand>
</feature>
<feature type="binding site" evidence="1">
    <location>
        <position position="291"/>
    </location>
    <ligand>
        <name>S-adenosyl-L-methionine</name>
        <dbReference type="ChEBI" id="CHEBI:59789"/>
    </ligand>
</feature>
<feature type="disulfide bond" description="(transient)" evidence="1">
    <location>
        <begin position="107"/>
        <end position="334"/>
    </location>
</feature>